<feature type="chain" id="PRO_1000003084" description="Phospho-N-acetylmuramoyl-pentapeptide-transferase">
    <location>
        <begin position="1"/>
        <end position="392"/>
    </location>
</feature>
<feature type="transmembrane region" description="Helical" evidence="1">
    <location>
        <begin position="29"/>
        <end position="49"/>
    </location>
</feature>
<feature type="transmembrane region" description="Helical" evidence="1">
    <location>
        <begin position="76"/>
        <end position="96"/>
    </location>
</feature>
<feature type="transmembrane region" description="Helical" evidence="1">
    <location>
        <begin position="100"/>
        <end position="120"/>
    </location>
</feature>
<feature type="transmembrane region" description="Helical" evidence="1">
    <location>
        <begin position="137"/>
        <end position="157"/>
    </location>
</feature>
<feature type="transmembrane region" description="Helical" evidence="1">
    <location>
        <begin position="192"/>
        <end position="212"/>
    </location>
</feature>
<feature type="transmembrane region" description="Helical" evidence="1">
    <location>
        <begin position="225"/>
        <end position="245"/>
    </location>
</feature>
<feature type="transmembrane region" description="Helical" evidence="1">
    <location>
        <begin position="262"/>
        <end position="282"/>
    </location>
</feature>
<feature type="transmembrane region" description="Helical" evidence="1">
    <location>
        <begin position="289"/>
        <end position="309"/>
    </location>
</feature>
<feature type="transmembrane region" description="Helical" evidence="1">
    <location>
        <begin position="314"/>
        <end position="334"/>
    </location>
</feature>
<feature type="transmembrane region" description="Helical" evidence="1">
    <location>
        <begin position="369"/>
        <end position="389"/>
    </location>
</feature>
<gene>
    <name evidence="1" type="primary">mraY</name>
    <name type="ordered locus">Veis_4567</name>
</gene>
<dbReference type="EC" id="2.7.8.13" evidence="1"/>
<dbReference type="EMBL" id="CP000542">
    <property type="protein sequence ID" value="ABM60265.1"/>
    <property type="molecule type" value="Genomic_DNA"/>
</dbReference>
<dbReference type="RefSeq" id="WP_011812249.1">
    <property type="nucleotide sequence ID" value="NC_008786.1"/>
</dbReference>
<dbReference type="SMR" id="A1WRK8"/>
<dbReference type="STRING" id="391735.Veis_4567"/>
<dbReference type="GeneID" id="76462860"/>
<dbReference type="KEGG" id="vei:Veis_4567"/>
<dbReference type="eggNOG" id="COG0472">
    <property type="taxonomic scope" value="Bacteria"/>
</dbReference>
<dbReference type="HOGENOM" id="CLU_023982_0_0_4"/>
<dbReference type="OrthoDB" id="9805475at2"/>
<dbReference type="UniPathway" id="UPA00219"/>
<dbReference type="Proteomes" id="UP000000374">
    <property type="component" value="Chromosome"/>
</dbReference>
<dbReference type="GO" id="GO:0005886">
    <property type="term" value="C:plasma membrane"/>
    <property type="evidence" value="ECO:0007669"/>
    <property type="project" value="UniProtKB-SubCell"/>
</dbReference>
<dbReference type="GO" id="GO:0046872">
    <property type="term" value="F:metal ion binding"/>
    <property type="evidence" value="ECO:0007669"/>
    <property type="project" value="UniProtKB-KW"/>
</dbReference>
<dbReference type="GO" id="GO:0008963">
    <property type="term" value="F:phospho-N-acetylmuramoyl-pentapeptide-transferase activity"/>
    <property type="evidence" value="ECO:0007669"/>
    <property type="project" value="UniProtKB-UniRule"/>
</dbReference>
<dbReference type="GO" id="GO:0051992">
    <property type="term" value="F:UDP-N-acetylmuramoyl-L-alanyl-D-glutamyl-meso-2,6-diaminopimelyl-D-alanyl-D-alanine:undecaprenyl-phosphate transferase activity"/>
    <property type="evidence" value="ECO:0007669"/>
    <property type="project" value="RHEA"/>
</dbReference>
<dbReference type="GO" id="GO:0051301">
    <property type="term" value="P:cell division"/>
    <property type="evidence" value="ECO:0007669"/>
    <property type="project" value="UniProtKB-KW"/>
</dbReference>
<dbReference type="GO" id="GO:0071555">
    <property type="term" value="P:cell wall organization"/>
    <property type="evidence" value="ECO:0007669"/>
    <property type="project" value="UniProtKB-KW"/>
</dbReference>
<dbReference type="GO" id="GO:0009252">
    <property type="term" value="P:peptidoglycan biosynthetic process"/>
    <property type="evidence" value="ECO:0007669"/>
    <property type="project" value="UniProtKB-UniRule"/>
</dbReference>
<dbReference type="GO" id="GO:0008360">
    <property type="term" value="P:regulation of cell shape"/>
    <property type="evidence" value="ECO:0007669"/>
    <property type="project" value="UniProtKB-KW"/>
</dbReference>
<dbReference type="CDD" id="cd06852">
    <property type="entry name" value="GT_MraY"/>
    <property type="match status" value="1"/>
</dbReference>
<dbReference type="HAMAP" id="MF_00038">
    <property type="entry name" value="MraY"/>
    <property type="match status" value="1"/>
</dbReference>
<dbReference type="InterPro" id="IPR000715">
    <property type="entry name" value="Glycosyl_transferase_4"/>
</dbReference>
<dbReference type="InterPro" id="IPR003524">
    <property type="entry name" value="PNAcMuramoyl-5peptid_Trfase"/>
</dbReference>
<dbReference type="InterPro" id="IPR018480">
    <property type="entry name" value="PNAcMuramoyl-5peptid_Trfase_CS"/>
</dbReference>
<dbReference type="NCBIfam" id="TIGR00445">
    <property type="entry name" value="mraY"/>
    <property type="match status" value="1"/>
</dbReference>
<dbReference type="PANTHER" id="PTHR22926">
    <property type="entry name" value="PHOSPHO-N-ACETYLMURAMOYL-PENTAPEPTIDE-TRANSFERASE"/>
    <property type="match status" value="1"/>
</dbReference>
<dbReference type="PANTHER" id="PTHR22926:SF5">
    <property type="entry name" value="PHOSPHO-N-ACETYLMURAMOYL-PENTAPEPTIDE-TRANSFERASE HOMOLOG"/>
    <property type="match status" value="1"/>
</dbReference>
<dbReference type="Pfam" id="PF00953">
    <property type="entry name" value="Glycos_transf_4"/>
    <property type="match status" value="1"/>
</dbReference>
<dbReference type="Pfam" id="PF10555">
    <property type="entry name" value="MraY_sig1"/>
    <property type="match status" value="1"/>
</dbReference>
<dbReference type="PROSITE" id="PS01347">
    <property type="entry name" value="MRAY_1"/>
    <property type="match status" value="1"/>
</dbReference>
<dbReference type="PROSITE" id="PS01348">
    <property type="entry name" value="MRAY_2"/>
    <property type="match status" value="1"/>
</dbReference>
<comment type="function">
    <text evidence="1">Catalyzes the initial step of the lipid cycle reactions in the biosynthesis of the cell wall peptidoglycan: transfers peptidoglycan precursor phospho-MurNAc-pentapeptide from UDP-MurNAc-pentapeptide onto the lipid carrier undecaprenyl phosphate, yielding undecaprenyl-pyrophosphoryl-MurNAc-pentapeptide, known as lipid I.</text>
</comment>
<comment type="catalytic activity">
    <reaction evidence="1">
        <text>UDP-N-acetyl-alpha-D-muramoyl-L-alanyl-gamma-D-glutamyl-meso-2,6-diaminopimeloyl-D-alanyl-D-alanine + di-trans,octa-cis-undecaprenyl phosphate = di-trans,octa-cis-undecaprenyl diphospho-N-acetyl-alpha-D-muramoyl-L-alanyl-D-glutamyl-meso-2,6-diaminopimeloyl-D-alanyl-D-alanine + UMP</text>
        <dbReference type="Rhea" id="RHEA:28386"/>
        <dbReference type="ChEBI" id="CHEBI:57865"/>
        <dbReference type="ChEBI" id="CHEBI:60392"/>
        <dbReference type="ChEBI" id="CHEBI:61386"/>
        <dbReference type="ChEBI" id="CHEBI:61387"/>
        <dbReference type="EC" id="2.7.8.13"/>
    </reaction>
</comment>
<comment type="cofactor">
    <cofactor evidence="1">
        <name>Mg(2+)</name>
        <dbReference type="ChEBI" id="CHEBI:18420"/>
    </cofactor>
</comment>
<comment type="pathway">
    <text evidence="1">Cell wall biogenesis; peptidoglycan biosynthesis.</text>
</comment>
<comment type="subcellular location">
    <subcellularLocation>
        <location evidence="1">Cell inner membrane</location>
        <topology evidence="1">Multi-pass membrane protein</topology>
    </subcellularLocation>
</comment>
<comment type="similarity">
    <text evidence="1">Belongs to the glycosyltransferase 4 family. MraY subfamily.</text>
</comment>
<name>MRAY_VEREI</name>
<sequence length="392" mass="42905">MMLLLAQWLQGMSSELGFLRVFQYLTMRAVLAALTALLIGLAAGSWVIGKLMALKIGQPIRGYAPQSHLSKSGTPTMGGVLILLSIALSTLLWFDLSNRFVWIVLLVTLGFGAIGWVDDWRKVVDKNPEGMRSREKYLWQSLIGLMAALYLVFCISENSNAKVLELFISWMRSGFALDLPPKAGLQLPFFKAVSYPLGVLGFVLLTYLVIVGSSNAVNLTDGLDGLAIMPVVMVGSALGVFAYVTGSAVYSRYLFFPHIPGSGELLIFCAAMAGAGLAFLWFNAHPAQVFMGDVGALALGAALGTIAIIVRQEIVLAVMGGIFVAEALSVMLQVGWFKYTRYRYGEGRRLLKMAPLHHHFEKSGWKETQVVVRFWIITMLLCLVGLSTLKLR</sequence>
<organism>
    <name type="scientific">Verminephrobacter eiseniae (strain EF01-2)</name>
    <dbReference type="NCBI Taxonomy" id="391735"/>
    <lineage>
        <taxon>Bacteria</taxon>
        <taxon>Pseudomonadati</taxon>
        <taxon>Pseudomonadota</taxon>
        <taxon>Betaproteobacteria</taxon>
        <taxon>Burkholderiales</taxon>
        <taxon>Comamonadaceae</taxon>
        <taxon>Verminephrobacter</taxon>
    </lineage>
</organism>
<accession>A1WRK8</accession>
<protein>
    <recommendedName>
        <fullName evidence="1">Phospho-N-acetylmuramoyl-pentapeptide-transferase</fullName>
        <ecNumber evidence="1">2.7.8.13</ecNumber>
    </recommendedName>
    <alternativeName>
        <fullName evidence="1">UDP-MurNAc-pentapeptide phosphotransferase</fullName>
    </alternativeName>
</protein>
<proteinExistence type="inferred from homology"/>
<reference key="1">
    <citation type="submission" date="2006-12" db="EMBL/GenBank/DDBJ databases">
        <title>Complete sequence of chromosome 1 of Verminephrobacter eiseniae EF01-2.</title>
        <authorList>
            <person name="Copeland A."/>
            <person name="Lucas S."/>
            <person name="Lapidus A."/>
            <person name="Barry K."/>
            <person name="Detter J.C."/>
            <person name="Glavina del Rio T."/>
            <person name="Dalin E."/>
            <person name="Tice H."/>
            <person name="Pitluck S."/>
            <person name="Chertkov O."/>
            <person name="Brettin T."/>
            <person name="Bruce D."/>
            <person name="Han C."/>
            <person name="Tapia R."/>
            <person name="Gilna P."/>
            <person name="Schmutz J."/>
            <person name="Larimer F."/>
            <person name="Land M."/>
            <person name="Hauser L."/>
            <person name="Kyrpides N."/>
            <person name="Kim E."/>
            <person name="Stahl D."/>
            <person name="Richardson P."/>
        </authorList>
    </citation>
    <scope>NUCLEOTIDE SEQUENCE [LARGE SCALE GENOMIC DNA]</scope>
    <source>
        <strain>EF01-2</strain>
    </source>
</reference>
<evidence type="ECO:0000255" key="1">
    <source>
        <dbReference type="HAMAP-Rule" id="MF_00038"/>
    </source>
</evidence>
<keyword id="KW-0131">Cell cycle</keyword>
<keyword id="KW-0132">Cell division</keyword>
<keyword id="KW-0997">Cell inner membrane</keyword>
<keyword id="KW-1003">Cell membrane</keyword>
<keyword id="KW-0133">Cell shape</keyword>
<keyword id="KW-0961">Cell wall biogenesis/degradation</keyword>
<keyword id="KW-0460">Magnesium</keyword>
<keyword id="KW-0472">Membrane</keyword>
<keyword id="KW-0479">Metal-binding</keyword>
<keyword id="KW-0573">Peptidoglycan synthesis</keyword>
<keyword id="KW-1185">Reference proteome</keyword>
<keyword id="KW-0808">Transferase</keyword>
<keyword id="KW-0812">Transmembrane</keyword>
<keyword id="KW-1133">Transmembrane helix</keyword>